<name>SYFA_DESRM</name>
<evidence type="ECO:0000255" key="1">
    <source>
        <dbReference type="HAMAP-Rule" id="MF_00281"/>
    </source>
</evidence>
<organism>
    <name type="scientific">Desulforamulus reducens (strain ATCC BAA-1160 / DSM 100696 / MI-1)</name>
    <name type="common">Desulfotomaculum reducens</name>
    <dbReference type="NCBI Taxonomy" id="349161"/>
    <lineage>
        <taxon>Bacteria</taxon>
        <taxon>Bacillati</taxon>
        <taxon>Bacillota</taxon>
        <taxon>Clostridia</taxon>
        <taxon>Eubacteriales</taxon>
        <taxon>Peptococcaceae</taxon>
        <taxon>Desulforamulus</taxon>
    </lineage>
</organism>
<sequence>MEQKLRTLAQEALAALESAKTPEALNDIRVKYLGKKGEVTQLLRGMGALSAEERPRVGQVANEVRASIEQALEERNARVKEAQKEQMLAAETIDVTLPGNQFGLGRMHPLTQVMQEIESIFMGLGFKIAEGPEVELDYYNFEALNLPKDHPARDMQDTFFINPEVLLRTHTSPVQVRTMEKMVPQVPIKIICPGRVYRRDDDATHSPMFHQVEGLVVDKHITFADLKGVLATFARQMFGLDTKTRLRPSYFPFTEPSAEVDISCFNCKGNGCRVCKGSGWLEILGSGMVHPRVLEMSGYNPEEVTGFAFGMGVERIAMLKYGIDDLRLLFDNDLRFLSQF</sequence>
<keyword id="KW-0030">Aminoacyl-tRNA synthetase</keyword>
<keyword id="KW-0067">ATP-binding</keyword>
<keyword id="KW-0963">Cytoplasm</keyword>
<keyword id="KW-0436">Ligase</keyword>
<keyword id="KW-0460">Magnesium</keyword>
<keyword id="KW-0479">Metal-binding</keyword>
<keyword id="KW-0547">Nucleotide-binding</keyword>
<keyword id="KW-0648">Protein biosynthesis</keyword>
<keyword id="KW-1185">Reference proteome</keyword>
<gene>
    <name evidence="1" type="primary">pheS</name>
    <name type="ordered locus">Dred_1619</name>
</gene>
<feature type="chain" id="PRO_1000071934" description="Phenylalanine--tRNA ligase alpha subunit">
    <location>
        <begin position="1"/>
        <end position="340"/>
    </location>
</feature>
<feature type="binding site" evidence="1">
    <location>
        <position position="255"/>
    </location>
    <ligand>
        <name>Mg(2+)</name>
        <dbReference type="ChEBI" id="CHEBI:18420"/>
        <note>shared with beta subunit</note>
    </ligand>
</feature>
<proteinExistence type="inferred from homology"/>
<comment type="catalytic activity">
    <reaction evidence="1">
        <text>tRNA(Phe) + L-phenylalanine + ATP = L-phenylalanyl-tRNA(Phe) + AMP + diphosphate + H(+)</text>
        <dbReference type="Rhea" id="RHEA:19413"/>
        <dbReference type="Rhea" id="RHEA-COMP:9668"/>
        <dbReference type="Rhea" id="RHEA-COMP:9699"/>
        <dbReference type="ChEBI" id="CHEBI:15378"/>
        <dbReference type="ChEBI" id="CHEBI:30616"/>
        <dbReference type="ChEBI" id="CHEBI:33019"/>
        <dbReference type="ChEBI" id="CHEBI:58095"/>
        <dbReference type="ChEBI" id="CHEBI:78442"/>
        <dbReference type="ChEBI" id="CHEBI:78531"/>
        <dbReference type="ChEBI" id="CHEBI:456215"/>
        <dbReference type="EC" id="6.1.1.20"/>
    </reaction>
</comment>
<comment type="cofactor">
    <cofactor evidence="1">
        <name>Mg(2+)</name>
        <dbReference type="ChEBI" id="CHEBI:18420"/>
    </cofactor>
    <text evidence="1">Binds 2 magnesium ions per tetramer.</text>
</comment>
<comment type="subunit">
    <text evidence="1">Tetramer of two alpha and two beta subunits.</text>
</comment>
<comment type="subcellular location">
    <subcellularLocation>
        <location evidence="1">Cytoplasm</location>
    </subcellularLocation>
</comment>
<comment type="similarity">
    <text evidence="1">Belongs to the class-II aminoacyl-tRNA synthetase family. Phe-tRNA synthetase alpha subunit type 1 subfamily.</text>
</comment>
<protein>
    <recommendedName>
        <fullName evidence="1">Phenylalanine--tRNA ligase alpha subunit</fullName>
        <ecNumber evidence="1">6.1.1.20</ecNumber>
    </recommendedName>
    <alternativeName>
        <fullName evidence="1">Phenylalanyl-tRNA synthetase alpha subunit</fullName>
        <shortName evidence="1">PheRS</shortName>
    </alternativeName>
</protein>
<accession>A4J4Z4</accession>
<dbReference type="EC" id="6.1.1.20" evidence="1"/>
<dbReference type="EMBL" id="CP000612">
    <property type="protein sequence ID" value="ABO50147.1"/>
    <property type="molecule type" value="Genomic_DNA"/>
</dbReference>
<dbReference type="RefSeq" id="WP_011877963.1">
    <property type="nucleotide sequence ID" value="NC_009253.1"/>
</dbReference>
<dbReference type="SMR" id="A4J4Z4"/>
<dbReference type="STRING" id="349161.Dred_1619"/>
<dbReference type="KEGG" id="drm:Dred_1619"/>
<dbReference type="eggNOG" id="COG0016">
    <property type="taxonomic scope" value="Bacteria"/>
</dbReference>
<dbReference type="HOGENOM" id="CLU_025086_0_1_9"/>
<dbReference type="OrthoDB" id="9800719at2"/>
<dbReference type="Proteomes" id="UP000001556">
    <property type="component" value="Chromosome"/>
</dbReference>
<dbReference type="GO" id="GO:0005737">
    <property type="term" value="C:cytoplasm"/>
    <property type="evidence" value="ECO:0007669"/>
    <property type="project" value="UniProtKB-SubCell"/>
</dbReference>
<dbReference type="GO" id="GO:0005524">
    <property type="term" value="F:ATP binding"/>
    <property type="evidence" value="ECO:0007669"/>
    <property type="project" value="UniProtKB-UniRule"/>
</dbReference>
<dbReference type="GO" id="GO:0140096">
    <property type="term" value="F:catalytic activity, acting on a protein"/>
    <property type="evidence" value="ECO:0007669"/>
    <property type="project" value="UniProtKB-ARBA"/>
</dbReference>
<dbReference type="GO" id="GO:0000287">
    <property type="term" value="F:magnesium ion binding"/>
    <property type="evidence" value="ECO:0007669"/>
    <property type="project" value="UniProtKB-UniRule"/>
</dbReference>
<dbReference type="GO" id="GO:0004826">
    <property type="term" value="F:phenylalanine-tRNA ligase activity"/>
    <property type="evidence" value="ECO:0007669"/>
    <property type="project" value="UniProtKB-UniRule"/>
</dbReference>
<dbReference type="GO" id="GO:0016740">
    <property type="term" value="F:transferase activity"/>
    <property type="evidence" value="ECO:0007669"/>
    <property type="project" value="UniProtKB-ARBA"/>
</dbReference>
<dbReference type="GO" id="GO:0000049">
    <property type="term" value="F:tRNA binding"/>
    <property type="evidence" value="ECO:0007669"/>
    <property type="project" value="InterPro"/>
</dbReference>
<dbReference type="GO" id="GO:0006432">
    <property type="term" value="P:phenylalanyl-tRNA aminoacylation"/>
    <property type="evidence" value="ECO:0007669"/>
    <property type="project" value="UniProtKB-UniRule"/>
</dbReference>
<dbReference type="CDD" id="cd00496">
    <property type="entry name" value="PheRS_alpha_core"/>
    <property type="match status" value="1"/>
</dbReference>
<dbReference type="FunFam" id="3.30.930.10:FF:000003">
    <property type="entry name" value="Phenylalanine--tRNA ligase alpha subunit"/>
    <property type="match status" value="1"/>
</dbReference>
<dbReference type="Gene3D" id="3.30.930.10">
    <property type="entry name" value="Bira Bifunctional Protein, Domain 2"/>
    <property type="match status" value="1"/>
</dbReference>
<dbReference type="HAMAP" id="MF_00281">
    <property type="entry name" value="Phe_tRNA_synth_alpha1"/>
    <property type="match status" value="1"/>
</dbReference>
<dbReference type="InterPro" id="IPR006195">
    <property type="entry name" value="aa-tRNA-synth_II"/>
</dbReference>
<dbReference type="InterPro" id="IPR045864">
    <property type="entry name" value="aa-tRNA-synth_II/BPL/LPL"/>
</dbReference>
<dbReference type="InterPro" id="IPR004529">
    <property type="entry name" value="Phe-tRNA-synth_IIc_asu"/>
</dbReference>
<dbReference type="InterPro" id="IPR004188">
    <property type="entry name" value="Phe-tRNA_ligase_II_N"/>
</dbReference>
<dbReference type="InterPro" id="IPR022911">
    <property type="entry name" value="Phe_tRNA_ligase_alpha1_bac"/>
</dbReference>
<dbReference type="InterPro" id="IPR002319">
    <property type="entry name" value="Phenylalanyl-tRNA_Synthase"/>
</dbReference>
<dbReference type="InterPro" id="IPR010978">
    <property type="entry name" value="tRNA-bd_arm"/>
</dbReference>
<dbReference type="NCBIfam" id="TIGR00468">
    <property type="entry name" value="pheS"/>
    <property type="match status" value="1"/>
</dbReference>
<dbReference type="PANTHER" id="PTHR11538:SF41">
    <property type="entry name" value="PHENYLALANINE--TRNA LIGASE, MITOCHONDRIAL"/>
    <property type="match status" value="1"/>
</dbReference>
<dbReference type="PANTHER" id="PTHR11538">
    <property type="entry name" value="PHENYLALANYL-TRNA SYNTHETASE"/>
    <property type="match status" value="1"/>
</dbReference>
<dbReference type="Pfam" id="PF02912">
    <property type="entry name" value="Phe_tRNA-synt_N"/>
    <property type="match status" value="1"/>
</dbReference>
<dbReference type="Pfam" id="PF01409">
    <property type="entry name" value="tRNA-synt_2d"/>
    <property type="match status" value="1"/>
</dbReference>
<dbReference type="SUPFAM" id="SSF55681">
    <property type="entry name" value="Class II aaRS and biotin synthetases"/>
    <property type="match status" value="1"/>
</dbReference>
<dbReference type="SUPFAM" id="SSF46589">
    <property type="entry name" value="tRNA-binding arm"/>
    <property type="match status" value="1"/>
</dbReference>
<dbReference type="PROSITE" id="PS50862">
    <property type="entry name" value="AA_TRNA_LIGASE_II"/>
    <property type="match status" value="1"/>
</dbReference>
<reference key="1">
    <citation type="submission" date="2007-03" db="EMBL/GenBank/DDBJ databases">
        <title>Complete sequence of Desulfotomaculum reducens MI-1.</title>
        <authorList>
            <consortium name="US DOE Joint Genome Institute"/>
            <person name="Copeland A."/>
            <person name="Lucas S."/>
            <person name="Lapidus A."/>
            <person name="Barry K."/>
            <person name="Detter J.C."/>
            <person name="Glavina del Rio T."/>
            <person name="Hammon N."/>
            <person name="Israni S."/>
            <person name="Dalin E."/>
            <person name="Tice H."/>
            <person name="Pitluck S."/>
            <person name="Sims D."/>
            <person name="Brettin T."/>
            <person name="Bruce D."/>
            <person name="Han C."/>
            <person name="Tapia R."/>
            <person name="Schmutz J."/>
            <person name="Larimer F."/>
            <person name="Land M."/>
            <person name="Hauser L."/>
            <person name="Kyrpides N."/>
            <person name="Kim E."/>
            <person name="Tebo B.M."/>
            <person name="Richardson P."/>
        </authorList>
    </citation>
    <scope>NUCLEOTIDE SEQUENCE [LARGE SCALE GENOMIC DNA]</scope>
    <source>
        <strain>ATCC BAA-1160 / DSM 100696 / MI-1</strain>
    </source>
</reference>